<keyword id="KW-0963">Cytoplasm</keyword>
<keyword id="KW-0521">NADP</keyword>
<keyword id="KW-0560">Oxidoreductase</keyword>
<keyword id="KW-0671">Queuosine biosynthesis</keyword>
<gene>
    <name evidence="1" type="primary">queF</name>
    <name type="ordered locus">Cvib_1417</name>
</gene>
<evidence type="ECO:0000255" key="1">
    <source>
        <dbReference type="HAMAP-Rule" id="MF_00818"/>
    </source>
</evidence>
<proteinExistence type="inferred from homology"/>
<organism>
    <name type="scientific">Chlorobium phaeovibrioides (strain DSM 265 / 1930)</name>
    <name type="common">Prosthecochloris vibrioformis (strain DSM 265)</name>
    <dbReference type="NCBI Taxonomy" id="290318"/>
    <lineage>
        <taxon>Bacteria</taxon>
        <taxon>Pseudomonadati</taxon>
        <taxon>Chlorobiota</taxon>
        <taxon>Chlorobiia</taxon>
        <taxon>Chlorobiales</taxon>
        <taxon>Chlorobiaceae</taxon>
        <taxon>Chlorobium/Pelodictyon group</taxon>
        <taxon>Chlorobium</taxon>
    </lineage>
</organism>
<name>QUEF_CHLPM</name>
<accession>A4SG19</accession>
<sequence length="116" mass="13227">MKKEILEVFDNTYPDRNYTIEIVNPEFTSVCPKTGLPDFGTITVHYVPDRTCVELKSLKYYFLEFRNAGIFYENITNRILDDLVAAMQPRSITVTTKWKARGGITETVTASHTAQG</sequence>
<feature type="chain" id="PRO_1000083838" description="NADPH-dependent 7-cyano-7-deazaguanine reductase">
    <location>
        <begin position="1"/>
        <end position="116"/>
    </location>
</feature>
<feature type="active site" description="Thioimide intermediate" evidence="1">
    <location>
        <position position="31"/>
    </location>
</feature>
<feature type="active site" description="Proton donor" evidence="1">
    <location>
        <position position="38"/>
    </location>
</feature>
<feature type="binding site" evidence="1">
    <location>
        <begin position="53"/>
        <end position="55"/>
    </location>
    <ligand>
        <name>substrate</name>
    </ligand>
</feature>
<feature type="binding site" evidence="1">
    <location>
        <begin position="72"/>
        <end position="73"/>
    </location>
    <ligand>
        <name>substrate</name>
    </ligand>
</feature>
<comment type="function">
    <text evidence="1">Catalyzes the NADPH-dependent reduction of 7-cyano-7-deazaguanine (preQ0) to 7-aminomethyl-7-deazaguanine (preQ1).</text>
</comment>
<comment type="catalytic activity">
    <reaction evidence="1">
        <text>7-aminomethyl-7-carbaguanine + 2 NADP(+) = 7-cyano-7-deazaguanine + 2 NADPH + 3 H(+)</text>
        <dbReference type="Rhea" id="RHEA:13409"/>
        <dbReference type="ChEBI" id="CHEBI:15378"/>
        <dbReference type="ChEBI" id="CHEBI:45075"/>
        <dbReference type="ChEBI" id="CHEBI:57783"/>
        <dbReference type="ChEBI" id="CHEBI:58349"/>
        <dbReference type="ChEBI" id="CHEBI:58703"/>
        <dbReference type="EC" id="1.7.1.13"/>
    </reaction>
</comment>
<comment type="pathway">
    <text evidence="1">tRNA modification; tRNA-queuosine biosynthesis.</text>
</comment>
<comment type="subcellular location">
    <subcellularLocation>
        <location evidence="1">Cytoplasm</location>
    </subcellularLocation>
</comment>
<comment type="similarity">
    <text evidence="1">Belongs to the GTP cyclohydrolase I family. QueF type 1 subfamily.</text>
</comment>
<protein>
    <recommendedName>
        <fullName evidence="1">NADPH-dependent 7-cyano-7-deazaguanine reductase</fullName>
        <ecNumber evidence="1">1.7.1.13</ecNumber>
    </recommendedName>
    <alternativeName>
        <fullName evidence="1">7-cyano-7-carbaguanine reductase</fullName>
    </alternativeName>
    <alternativeName>
        <fullName evidence="1">NADPH-dependent nitrile oxidoreductase</fullName>
    </alternativeName>
    <alternativeName>
        <fullName evidence="1">PreQ(0) reductase</fullName>
    </alternativeName>
</protein>
<dbReference type="EC" id="1.7.1.13" evidence="1"/>
<dbReference type="EMBL" id="CP000607">
    <property type="protein sequence ID" value="ABP37428.1"/>
    <property type="molecule type" value="Genomic_DNA"/>
</dbReference>
<dbReference type="SMR" id="A4SG19"/>
<dbReference type="STRING" id="290318.Cvib_1417"/>
<dbReference type="KEGG" id="pvi:Cvib_1417"/>
<dbReference type="eggNOG" id="COG0780">
    <property type="taxonomic scope" value="Bacteria"/>
</dbReference>
<dbReference type="HOGENOM" id="CLU_102489_1_0_10"/>
<dbReference type="OrthoDB" id="9795077at2"/>
<dbReference type="UniPathway" id="UPA00392"/>
<dbReference type="GO" id="GO:0005737">
    <property type="term" value="C:cytoplasm"/>
    <property type="evidence" value="ECO:0007669"/>
    <property type="project" value="UniProtKB-SubCell"/>
</dbReference>
<dbReference type="GO" id="GO:0033739">
    <property type="term" value="F:preQ1 synthase activity"/>
    <property type="evidence" value="ECO:0007669"/>
    <property type="project" value="UniProtKB-UniRule"/>
</dbReference>
<dbReference type="GO" id="GO:0008616">
    <property type="term" value="P:queuosine biosynthetic process"/>
    <property type="evidence" value="ECO:0007669"/>
    <property type="project" value="UniProtKB-UniRule"/>
</dbReference>
<dbReference type="GO" id="GO:0006400">
    <property type="term" value="P:tRNA modification"/>
    <property type="evidence" value="ECO:0007669"/>
    <property type="project" value="UniProtKB-UniRule"/>
</dbReference>
<dbReference type="Gene3D" id="3.30.1130.10">
    <property type="match status" value="1"/>
</dbReference>
<dbReference type="HAMAP" id="MF_00818">
    <property type="entry name" value="QueF_type1"/>
    <property type="match status" value="1"/>
</dbReference>
<dbReference type="InterPro" id="IPR043133">
    <property type="entry name" value="GTP-CH-I_C/QueF"/>
</dbReference>
<dbReference type="InterPro" id="IPR050084">
    <property type="entry name" value="NADPH_dep_7-cyano-7-deazaG_red"/>
</dbReference>
<dbReference type="InterPro" id="IPR029500">
    <property type="entry name" value="QueF"/>
</dbReference>
<dbReference type="InterPro" id="IPR016856">
    <property type="entry name" value="QueF_type1"/>
</dbReference>
<dbReference type="NCBIfam" id="TIGR03139">
    <property type="entry name" value="QueF-II"/>
    <property type="match status" value="1"/>
</dbReference>
<dbReference type="PANTHER" id="PTHR34354">
    <property type="entry name" value="NADPH-DEPENDENT 7-CYANO-7-DEAZAGUANINE REDUCTASE"/>
    <property type="match status" value="1"/>
</dbReference>
<dbReference type="PANTHER" id="PTHR34354:SF1">
    <property type="entry name" value="NADPH-DEPENDENT 7-CYANO-7-DEAZAGUANINE REDUCTASE"/>
    <property type="match status" value="1"/>
</dbReference>
<dbReference type="Pfam" id="PF14489">
    <property type="entry name" value="QueF"/>
    <property type="match status" value="1"/>
</dbReference>
<dbReference type="PIRSF" id="PIRSF027377">
    <property type="entry name" value="Nitrile_oxidored_QueF"/>
    <property type="match status" value="1"/>
</dbReference>
<dbReference type="SUPFAM" id="SSF55620">
    <property type="entry name" value="Tetrahydrobiopterin biosynthesis enzymes-like"/>
    <property type="match status" value="1"/>
</dbReference>
<reference key="1">
    <citation type="submission" date="2007-03" db="EMBL/GenBank/DDBJ databases">
        <title>Complete sequence of Prosthecochloris vibrioformis DSM 265.</title>
        <authorList>
            <consortium name="US DOE Joint Genome Institute"/>
            <person name="Copeland A."/>
            <person name="Lucas S."/>
            <person name="Lapidus A."/>
            <person name="Barry K."/>
            <person name="Detter J.C."/>
            <person name="Glavina del Rio T."/>
            <person name="Hammon N."/>
            <person name="Israni S."/>
            <person name="Pitluck S."/>
            <person name="Schmutz J."/>
            <person name="Larimer F."/>
            <person name="Land M."/>
            <person name="Hauser L."/>
            <person name="Mikhailova N."/>
            <person name="Li T."/>
            <person name="Overmann J."/>
            <person name="Schuster S.C."/>
            <person name="Bryant D.A."/>
            <person name="Richardson P."/>
        </authorList>
    </citation>
    <scope>NUCLEOTIDE SEQUENCE [LARGE SCALE GENOMIC DNA]</scope>
    <source>
        <strain>DSM 265 / 1930</strain>
    </source>
</reference>